<sequence length="414" mass="45487">MNVLVLNAGSSSLKFQIIATDLERIQRDSDERLCHGYVERIGGEAIITVEPRGGPRKKVTAPVRNIAAALDYVLRWLASDQSGVAEIRSLSDVHAVGHRVVHGGEVFRESAVITDEVLQGIEDCIDLAPLHNPNNIKGILAARDAFGSGMPQVAVFDTAFHTSLPDHAYLYAMPYHLYARHRIRRYGFHGTSNRYVAYRYRTLRQLTREQTNIITLHLGNGCSATAIRNGRSMDTSMGMTPLEGLVMGTRSGDLDPAILSLIATKEGLSPTEVEALLNTQCGLLGISGVTNDMKVLLQELREHDDRRIRLAIEIFCYRARKYIGALLACMGGADAVIFTGGIGENAPEIRARICAGLEWAGLEIDSDQNAQTMGRPQQISKPESRLQAWVIPTDEELLIARDTVRCILGEPHPA</sequence>
<organism>
    <name type="scientific">Solibacter usitatus (strain Ellin6076)</name>
    <dbReference type="NCBI Taxonomy" id="234267"/>
    <lineage>
        <taxon>Bacteria</taxon>
        <taxon>Pseudomonadati</taxon>
        <taxon>Acidobacteriota</taxon>
        <taxon>Terriglobia</taxon>
        <taxon>Bryobacterales</taxon>
        <taxon>Solibacteraceae</taxon>
        <taxon>Candidatus Solibacter</taxon>
    </lineage>
</organism>
<accession>Q022T0</accession>
<evidence type="ECO:0000255" key="1">
    <source>
        <dbReference type="HAMAP-Rule" id="MF_00020"/>
    </source>
</evidence>
<protein>
    <recommendedName>
        <fullName evidence="1">Acetate kinase</fullName>
        <ecNumber evidence="1">2.7.2.1</ecNumber>
    </recommendedName>
    <alternativeName>
        <fullName evidence="1">Acetokinase</fullName>
    </alternativeName>
</protein>
<gene>
    <name evidence="1" type="primary">ackA</name>
    <name type="ordered locus">Acid_3041</name>
</gene>
<feature type="chain" id="PRO_1000074191" description="Acetate kinase">
    <location>
        <begin position="1"/>
        <end position="414"/>
    </location>
</feature>
<feature type="active site" description="Proton donor/acceptor" evidence="1">
    <location>
        <position position="157"/>
    </location>
</feature>
<feature type="binding site" evidence="1">
    <location>
        <position position="7"/>
    </location>
    <ligand>
        <name>Mg(2+)</name>
        <dbReference type="ChEBI" id="CHEBI:18420"/>
    </ligand>
</feature>
<feature type="binding site" evidence="1">
    <location>
        <position position="14"/>
    </location>
    <ligand>
        <name>ATP</name>
        <dbReference type="ChEBI" id="CHEBI:30616"/>
    </ligand>
</feature>
<feature type="binding site" evidence="1">
    <location>
        <position position="99"/>
    </location>
    <ligand>
        <name>substrate</name>
    </ligand>
</feature>
<feature type="binding site" evidence="1">
    <location>
        <begin position="217"/>
        <end position="221"/>
    </location>
    <ligand>
        <name>ATP</name>
        <dbReference type="ChEBI" id="CHEBI:30616"/>
    </ligand>
</feature>
<feature type="binding site" evidence="1">
    <location>
        <begin position="341"/>
        <end position="345"/>
    </location>
    <ligand>
        <name>ATP</name>
        <dbReference type="ChEBI" id="CHEBI:30616"/>
    </ligand>
</feature>
<feature type="binding site" evidence="1">
    <location>
        <position position="395"/>
    </location>
    <ligand>
        <name>Mg(2+)</name>
        <dbReference type="ChEBI" id="CHEBI:18420"/>
    </ligand>
</feature>
<feature type="site" description="Transition state stabilizer" evidence="1">
    <location>
        <position position="189"/>
    </location>
</feature>
<feature type="site" description="Transition state stabilizer" evidence="1">
    <location>
        <position position="250"/>
    </location>
</feature>
<proteinExistence type="inferred from homology"/>
<comment type="function">
    <text evidence="1">Catalyzes the formation of acetyl phosphate from acetate and ATP. Can also catalyze the reverse reaction.</text>
</comment>
<comment type="catalytic activity">
    <reaction evidence="1">
        <text>acetate + ATP = acetyl phosphate + ADP</text>
        <dbReference type="Rhea" id="RHEA:11352"/>
        <dbReference type="ChEBI" id="CHEBI:22191"/>
        <dbReference type="ChEBI" id="CHEBI:30089"/>
        <dbReference type="ChEBI" id="CHEBI:30616"/>
        <dbReference type="ChEBI" id="CHEBI:456216"/>
        <dbReference type="EC" id="2.7.2.1"/>
    </reaction>
</comment>
<comment type="cofactor">
    <cofactor evidence="1">
        <name>Mg(2+)</name>
        <dbReference type="ChEBI" id="CHEBI:18420"/>
    </cofactor>
    <cofactor evidence="1">
        <name>Mn(2+)</name>
        <dbReference type="ChEBI" id="CHEBI:29035"/>
    </cofactor>
    <text evidence="1">Mg(2+). Can also accept Mn(2+).</text>
</comment>
<comment type="pathway">
    <text evidence="1">Metabolic intermediate biosynthesis; acetyl-CoA biosynthesis; acetyl-CoA from acetate: step 1/2.</text>
</comment>
<comment type="subunit">
    <text evidence="1">Homodimer.</text>
</comment>
<comment type="subcellular location">
    <subcellularLocation>
        <location evidence="1">Cytoplasm</location>
    </subcellularLocation>
</comment>
<comment type="similarity">
    <text evidence="1">Belongs to the acetokinase family.</text>
</comment>
<reference key="1">
    <citation type="journal article" date="2009" name="Appl. Environ. Microbiol.">
        <title>Three genomes from the phylum Acidobacteria provide insight into the lifestyles of these microorganisms in soils.</title>
        <authorList>
            <person name="Ward N.L."/>
            <person name="Challacombe J.F."/>
            <person name="Janssen P.H."/>
            <person name="Henrissat B."/>
            <person name="Coutinho P.M."/>
            <person name="Wu M."/>
            <person name="Xie G."/>
            <person name="Haft D.H."/>
            <person name="Sait M."/>
            <person name="Badger J."/>
            <person name="Barabote R.D."/>
            <person name="Bradley B."/>
            <person name="Brettin T.S."/>
            <person name="Brinkac L.M."/>
            <person name="Bruce D."/>
            <person name="Creasy T."/>
            <person name="Daugherty S.C."/>
            <person name="Davidsen T.M."/>
            <person name="DeBoy R.T."/>
            <person name="Detter J.C."/>
            <person name="Dodson R.J."/>
            <person name="Durkin A.S."/>
            <person name="Ganapathy A."/>
            <person name="Gwinn-Giglio M."/>
            <person name="Han C.S."/>
            <person name="Khouri H."/>
            <person name="Kiss H."/>
            <person name="Kothari S.P."/>
            <person name="Madupu R."/>
            <person name="Nelson K.E."/>
            <person name="Nelson W.C."/>
            <person name="Paulsen I."/>
            <person name="Penn K."/>
            <person name="Ren Q."/>
            <person name="Rosovitz M.J."/>
            <person name="Selengut J.D."/>
            <person name="Shrivastava S."/>
            <person name="Sullivan S.A."/>
            <person name="Tapia R."/>
            <person name="Thompson L.S."/>
            <person name="Watkins K.L."/>
            <person name="Yang Q."/>
            <person name="Yu C."/>
            <person name="Zafar N."/>
            <person name="Zhou L."/>
            <person name="Kuske C.R."/>
        </authorList>
    </citation>
    <scope>NUCLEOTIDE SEQUENCE [LARGE SCALE GENOMIC DNA]</scope>
    <source>
        <strain>Ellin6076</strain>
    </source>
</reference>
<keyword id="KW-0067">ATP-binding</keyword>
<keyword id="KW-0963">Cytoplasm</keyword>
<keyword id="KW-0418">Kinase</keyword>
<keyword id="KW-0460">Magnesium</keyword>
<keyword id="KW-0479">Metal-binding</keyword>
<keyword id="KW-0547">Nucleotide-binding</keyword>
<keyword id="KW-0808">Transferase</keyword>
<dbReference type="EC" id="2.7.2.1" evidence="1"/>
<dbReference type="EMBL" id="CP000473">
    <property type="protein sequence ID" value="ABJ84020.1"/>
    <property type="molecule type" value="Genomic_DNA"/>
</dbReference>
<dbReference type="SMR" id="Q022T0"/>
<dbReference type="FunCoup" id="Q022T0">
    <property type="interactions" value="402"/>
</dbReference>
<dbReference type="STRING" id="234267.Acid_3041"/>
<dbReference type="KEGG" id="sus:Acid_3041"/>
<dbReference type="eggNOG" id="COG0282">
    <property type="taxonomic scope" value="Bacteria"/>
</dbReference>
<dbReference type="HOGENOM" id="CLU_020352_0_1_0"/>
<dbReference type="InParanoid" id="Q022T0"/>
<dbReference type="OrthoDB" id="9802453at2"/>
<dbReference type="UniPathway" id="UPA00340">
    <property type="reaction ID" value="UER00458"/>
</dbReference>
<dbReference type="GO" id="GO:0005737">
    <property type="term" value="C:cytoplasm"/>
    <property type="evidence" value="ECO:0007669"/>
    <property type="project" value="UniProtKB-SubCell"/>
</dbReference>
<dbReference type="GO" id="GO:0008776">
    <property type="term" value="F:acetate kinase activity"/>
    <property type="evidence" value="ECO:0007669"/>
    <property type="project" value="UniProtKB-UniRule"/>
</dbReference>
<dbReference type="GO" id="GO:0005524">
    <property type="term" value="F:ATP binding"/>
    <property type="evidence" value="ECO:0007669"/>
    <property type="project" value="UniProtKB-KW"/>
</dbReference>
<dbReference type="GO" id="GO:0000287">
    <property type="term" value="F:magnesium ion binding"/>
    <property type="evidence" value="ECO:0007669"/>
    <property type="project" value="UniProtKB-UniRule"/>
</dbReference>
<dbReference type="GO" id="GO:0006083">
    <property type="term" value="P:acetate metabolic process"/>
    <property type="evidence" value="ECO:0007669"/>
    <property type="project" value="TreeGrafter"/>
</dbReference>
<dbReference type="GO" id="GO:0006085">
    <property type="term" value="P:acetyl-CoA biosynthetic process"/>
    <property type="evidence" value="ECO:0007669"/>
    <property type="project" value="UniProtKB-UniRule"/>
</dbReference>
<dbReference type="CDD" id="cd24010">
    <property type="entry name" value="ASKHA_NBD_AcK_PK"/>
    <property type="match status" value="1"/>
</dbReference>
<dbReference type="Gene3D" id="3.30.420.40">
    <property type="match status" value="2"/>
</dbReference>
<dbReference type="HAMAP" id="MF_00020">
    <property type="entry name" value="Acetate_kinase"/>
    <property type="match status" value="1"/>
</dbReference>
<dbReference type="InterPro" id="IPR004372">
    <property type="entry name" value="Ac/propionate_kinase"/>
</dbReference>
<dbReference type="InterPro" id="IPR000890">
    <property type="entry name" value="Aliphatic_acid_kin_short-chain"/>
</dbReference>
<dbReference type="InterPro" id="IPR023865">
    <property type="entry name" value="Aliphatic_acid_kinase_CS"/>
</dbReference>
<dbReference type="InterPro" id="IPR043129">
    <property type="entry name" value="ATPase_NBD"/>
</dbReference>
<dbReference type="NCBIfam" id="TIGR00016">
    <property type="entry name" value="ackA"/>
    <property type="match status" value="1"/>
</dbReference>
<dbReference type="PANTHER" id="PTHR21060">
    <property type="entry name" value="ACETATE KINASE"/>
    <property type="match status" value="1"/>
</dbReference>
<dbReference type="PANTHER" id="PTHR21060:SF15">
    <property type="entry name" value="ACETATE KINASE-RELATED"/>
    <property type="match status" value="1"/>
</dbReference>
<dbReference type="Pfam" id="PF00871">
    <property type="entry name" value="Acetate_kinase"/>
    <property type="match status" value="1"/>
</dbReference>
<dbReference type="PIRSF" id="PIRSF000722">
    <property type="entry name" value="Acetate_prop_kin"/>
    <property type="match status" value="1"/>
</dbReference>
<dbReference type="PRINTS" id="PR00471">
    <property type="entry name" value="ACETATEKNASE"/>
</dbReference>
<dbReference type="SUPFAM" id="SSF53067">
    <property type="entry name" value="Actin-like ATPase domain"/>
    <property type="match status" value="2"/>
</dbReference>
<dbReference type="PROSITE" id="PS01075">
    <property type="entry name" value="ACETATE_KINASE_1"/>
    <property type="match status" value="1"/>
</dbReference>
<dbReference type="PROSITE" id="PS01076">
    <property type="entry name" value="ACETATE_KINASE_2"/>
    <property type="match status" value="1"/>
</dbReference>
<name>ACKA_SOLUE</name>